<comment type="function">
    <text evidence="1">Exerts its effect at some terminal stage of cytochrome c oxidase synthesis, probably by being involved in the insertion of the copper B into subunit I.</text>
</comment>
<comment type="subcellular location">
    <subcellularLocation>
        <location evidence="1">Cell inner membrane</location>
        <topology evidence="1">Single-pass type II membrane protein</topology>
        <orientation evidence="1">Periplasmic side</orientation>
    </subcellularLocation>
</comment>
<comment type="similarity">
    <text evidence="1">Belongs to the COX11/CtaG family.</text>
</comment>
<feature type="chain" id="PRO_1000011359" description="Cytochrome c oxidase assembly protein CtaG">
    <location>
        <begin position="1"/>
        <end position="208"/>
    </location>
</feature>
<feature type="topological domain" description="Cytoplasmic" evidence="1">
    <location>
        <begin position="1"/>
        <end position="19"/>
    </location>
</feature>
<feature type="transmembrane region" description="Helical; Signal-anchor for type II membrane protein" evidence="1">
    <location>
        <begin position="20"/>
        <end position="42"/>
    </location>
</feature>
<feature type="topological domain" description="Periplasmic" evidence="1">
    <location>
        <begin position="43"/>
        <end position="208"/>
    </location>
</feature>
<protein>
    <recommendedName>
        <fullName evidence="1">Cytochrome c oxidase assembly protein CtaG</fullName>
    </recommendedName>
</protein>
<gene>
    <name evidence="1" type="primary">ctaG</name>
    <name type="ordered locus">RPE_4755</name>
</gene>
<sequence length="208" mass="22364">MKQRPTGPDTTPRNRRGFGRDTAVASVCGLVVALMVGASYAAVPFYNWFCRVTGFNGTTQVAAAAPQGGALKRTIAVRFDSNTNGLPWSFAPETTEIEIPIGQVTTVYYKVTNRAAHETTGQAAYNVAPLTVGAYFQKINCFCFTDQTLGPHETRELPVVFYVDPALATDSDNDTLNSITLSYTFYPLRSAAPKPLAASEAGPRQGAL</sequence>
<organism>
    <name type="scientific">Rhodopseudomonas palustris (strain BisA53)</name>
    <dbReference type="NCBI Taxonomy" id="316055"/>
    <lineage>
        <taxon>Bacteria</taxon>
        <taxon>Pseudomonadati</taxon>
        <taxon>Pseudomonadota</taxon>
        <taxon>Alphaproteobacteria</taxon>
        <taxon>Hyphomicrobiales</taxon>
        <taxon>Nitrobacteraceae</taxon>
        <taxon>Rhodopseudomonas</taxon>
    </lineage>
</organism>
<dbReference type="EMBL" id="CP000463">
    <property type="protein sequence ID" value="ABJ08674.1"/>
    <property type="molecule type" value="Genomic_DNA"/>
</dbReference>
<dbReference type="SMR" id="Q07HB0"/>
<dbReference type="STRING" id="316055.RPE_4755"/>
<dbReference type="KEGG" id="rpe:RPE_4755"/>
<dbReference type="eggNOG" id="COG3175">
    <property type="taxonomic scope" value="Bacteria"/>
</dbReference>
<dbReference type="HOGENOM" id="CLU_045000_5_0_5"/>
<dbReference type="OrthoDB" id="9804841at2"/>
<dbReference type="GO" id="GO:0005886">
    <property type="term" value="C:plasma membrane"/>
    <property type="evidence" value="ECO:0007669"/>
    <property type="project" value="UniProtKB-SubCell"/>
</dbReference>
<dbReference type="GO" id="GO:0005507">
    <property type="term" value="F:copper ion binding"/>
    <property type="evidence" value="ECO:0007669"/>
    <property type="project" value="InterPro"/>
</dbReference>
<dbReference type="GO" id="GO:0008535">
    <property type="term" value="P:respiratory chain complex IV assembly"/>
    <property type="evidence" value="ECO:0007669"/>
    <property type="project" value="UniProtKB-UniRule"/>
</dbReference>
<dbReference type="FunFam" id="2.60.370.10:FF:000001">
    <property type="entry name" value="COX11 cytochrome c oxidase assembly homolog"/>
    <property type="match status" value="1"/>
</dbReference>
<dbReference type="Gene3D" id="2.60.370.10">
    <property type="entry name" value="Ctag/Cox11"/>
    <property type="match status" value="1"/>
</dbReference>
<dbReference type="HAMAP" id="MF_00155">
    <property type="entry name" value="CtaG"/>
    <property type="match status" value="1"/>
</dbReference>
<dbReference type="InterPro" id="IPR023471">
    <property type="entry name" value="CtaG/Cox11_dom_sf"/>
</dbReference>
<dbReference type="InterPro" id="IPR007533">
    <property type="entry name" value="Cyt_c_oxidase_assmbl_CtaG"/>
</dbReference>
<dbReference type="NCBIfam" id="NF003465">
    <property type="entry name" value="PRK05089.1"/>
    <property type="match status" value="1"/>
</dbReference>
<dbReference type="PANTHER" id="PTHR21320:SF3">
    <property type="entry name" value="CYTOCHROME C OXIDASE ASSEMBLY PROTEIN COX11, MITOCHONDRIAL-RELATED"/>
    <property type="match status" value="1"/>
</dbReference>
<dbReference type="PANTHER" id="PTHR21320">
    <property type="entry name" value="CYTOCHROME C OXIDASE ASSEMBLY PROTEIN COX11-RELATED"/>
    <property type="match status" value="1"/>
</dbReference>
<dbReference type="Pfam" id="PF04442">
    <property type="entry name" value="CtaG_Cox11"/>
    <property type="match status" value="1"/>
</dbReference>
<dbReference type="PIRSF" id="PIRSF005413">
    <property type="entry name" value="COX11"/>
    <property type="match status" value="1"/>
</dbReference>
<dbReference type="SUPFAM" id="SSF110111">
    <property type="entry name" value="Ctag/Cox11"/>
    <property type="match status" value="1"/>
</dbReference>
<reference key="1">
    <citation type="submission" date="2006-09" db="EMBL/GenBank/DDBJ databases">
        <title>Complete sequence of Rhodopseudomonas palustris BisA53.</title>
        <authorList>
            <consortium name="US DOE Joint Genome Institute"/>
            <person name="Copeland A."/>
            <person name="Lucas S."/>
            <person name="Lapidus A."/>
            <person name="Barry K."/>
            <person name="Detter J.C."/>
            <person name="Glavina del Rio T."/>
            <person name="Hammon N."/>
            <person name="Israni S."/>
            <person name="Dalin E."/>
            <person name="Tice H."/>
            <person name="Pitluck S."/>
            <person name="Chain P."/>
            <person name="Malfatti S."/>
            <person name="Shin M."/>
            <person name="Vergez L."/>
            <person name="Schmutz J."/>
            <person name="Larimer F."/>
            <person name="Land M."/>
            <person name="Hauser L."/>
            <person name="Pelletier D.A."/>
            <person name="Kyrpides N."/>
            <person name="Kim E."/>
            <person name="Harwood C.S."/>
            <person name="Oda Y."/>
            <person name="Richardson P."/>
        </authorList>
    </citation>
    <scope>NUCLEOTIDE SEQUENCE [LARGE SCALE GENOMIC DNA]</scope>
    <source>
        <strain>BisA53</strain>
    </source>
</reference>
<proteinExistence type="inferred from homology"/>
<name>COXZ_RHOP5</name>
<accession>Q07HB0</accession>
<evidence type="ECO:0000255" key="1">
    <source>
        <dbReference type="HAMAP-Rule" id="MF_00155"/>
    </source>
</evidence>
<keyword id="KW-0997">Cell inner membrane</keyword>
<keyword id="KW-1003">Cell membrane</keyword>
<keyword id="KW-0186">Copper</keyword>
<keyword id="KW-0472">Membrane</keyword>
<keyword id="KW-0735">Signal-anchor</keyword>
<keyword id="KW-0812">Transmembrane</keyword>
<keyword id="KW-1133">Transmembrane helix</keyword>